<dbReference type="EC" id="2.8.1.13" evidence="1"/>
<dbReference type="EMBL" id="CP000781">
    <property type="protein sequence ID" value="ABS65662.1"/>
    <property type="status" value="ALT_INIT"/>
    <property type="molecule type" value="Genomic_DNA"/>
</dbReference>
<dbReference type="SMR" id="A7ICB9"/>
<dbReference type="STRING" id="78245.Xaut_0404"/>
<dbReference type="KEGG" id="xau:Xaut_0404"/>
<dbReference type="eggNOG" id="COG0482">
    <property type="taxonomic scope" value="Bacteria"/>
</dbReference>
<dbReference type="HOGENOM" id="CLU_035188_0_1_5"/>
<dbReference type="OrthoDB" id="9800696at2"/>
<dbReference type="Proteomes" id="UP000002417">
    <property type="component" value="Chromosome"/>
</dbReference>
<dbReference type="GO" id="GO:0005737">
    <property type="term" value="C:cytoplasm"/>
    <property type="evidence" value="ECO:0007669"/>
    <property type="project" value="UniProtKB-SubCell"/>
</dbReference>
<dbReference type="GO" id="GO:0005524">
    <property type="term" value="F:ATP binding"/>
    <property type="evidence" value="ECO:0007669"/>
    <property type="project" value="UniProtKB-KW"/>
</dbReference>
<dbReference type="GO" id="GO:0000049">
    <property type="term" value="F:tRNA binding"/>
    <property type="evidence" value="ECO:0007669"/>
    <property type="project" value="UniProtKB-KW"/>
</dbReference>
<dbReference type="GO" id="GO:0103016">
    <property type="term" value="F:tRNA-uridine 2-sulfurtransferase activity"/>
    <property type="evidence" value="ECO:0007669"/>
    <property type="project" value="UniProtKB-EC"/>
</dbReference>
<dbReference type="GO" id="GO:0002143">
    <property type="term" value="P:tRNA wobble position uridine thiolation"/>
    <property type="evidence" value="ECO:0007669"/>
    <property type="project" value="TreeGrafter"/>
</dbReference>
<dbReference type="CDD" id="cd01998">
    <property type="entry name" value="MnmA_TRMU-like"/>
    <property type="match status" value="1"/>
</dbReference>
<dbReference type="FunFam" id="2.30.30.280:FF:000001">
    <property type="entry name" value="tRNA-specific 2-thiouridylase MnmA"/>
    <property type="match status" value="1"/>
</dbReference>
<dbReference type="FunFam" id="3.40.50.620:FF:000115">
    <property type="entry name" value="tRNA-specific 2-thiouridylase MnmA"/>
    <property type="match status" value="1"/>
</dbReference>
<dbReference type="Gene3D" id="2.30.30.280">
    <property type="entry name" value="Adenine nucleotide alpha hydrolases-like domains"/>
    <property type="match status" value="1"/>
</dbReference>
<dbReference type="Gene3D" id="3.40.50.620">
    <property type="entry name" value="HUPs"/>
    <property type="match status" value="1"/>
</dbReference>
<dbReference type="Gene3D" id="2.40.30.10">
    <property type="entry name" value="Translation factors"/>
    <property type="match status" value="1"/>
</dbReference>
<dbReference type="HAMAP" id="MF_00144">
    <property type="entry name" value="tRNA_thiouridyl_MnmA"/>
    <property type="match status" value="1"/>
</dbReference>
<dbReference type="InterPro" id="IPR004506">
    <property type="entry name" value="MnmA-like"/>
</dbReference>
<dbReference type="InterPro" id="IPR046885">
    <property type="entry name" value="MnmA-like_C"/>
</dbReference>
<dbReference type="InterPro" id="IPR046884">
    <property type="entry name" value="MnmA-like_central"/>
</dbReference>
<dbReference type="InterPro" id="IPR023382">
    <property type="entry name" value="MnmA-like_central_sf"/>
</dbReference>
<dbReference type="InterPro" id="IPR014729">
    <property type="entry name" value="Rossmann-like_a/b/a_fold"/>
</dbReference>
<dbReference type="NCBIfam" id="NF001138">
    <property type="entry name" value="PRK00143.1"/>
    <property type="match status" value="1"/>
</dbReference>
<dbReference type="NCBIfam" id="TIGR00420">
    <property type="entry name" value="trmU"/>
    <property type="match status" value="1"/>
</dbReference>
<dbReference type="PANTHER" id="PTHR11933:SF5">
    <property type="entry name" value="MITOCHONDRIAL TRNA-SPECIFIC 2-THIOURIDYLASE 1"/>
    <property type="match status" value="1"/>
</dbReference>
<dbReference type="PANTHER" id="PTHR11933">
    <property type="entry name" value="TRNA 5-METHYLAMINOMETHYL-2-THIOURIDYLATE -METHYLTRANSFERASE"/>
    <property type="match status" value="1"/>
</dbReference>
<dbReference type="Pfam" id="PF03054">
    <property type="entry name" value="tRNA_Me_trans"/>
    <property type="match status" value="1"/>
</dbReference>
<dbReference type="Pfam" id="PF20258">
    <property type="entry name" value="tRNA_Me_trans_C"/>
    <property type="match status" value="1"/>
</dbReference>
<dbReference type="Pfam" id="PF20259">
    <property type="entry name" value="tRNA_Me_trans_M"/>
    <property type="match status" value="1"/>
</dbReference>
<dbReference type="SUPFAM" id="SSF52402">
    <property type="entry name" value="Adenine nucleotide alpha hydrolases-like"/>
    <property type="match status" value="1"/>
</dbReference>
<proteinExistence type="inferred from homology"/>
<name>MNMA_XANP2</name>
<evidence type="ECO:0000255" key="1">
    <source>
        <dbReference type="HAMAP-Rule" id="MF_00144"/>
    </source>
</evidence>
<evidence type="ECO:0000305" key="2"/>
<keyword id="KW-0067">ATP-binding</keyword>
<keyword id="KW-0963">Cytoplasm</keyword>
<keyword id="KW-1015">Disulfide bond</keyword>
<keyword id="KW-0547">Nucleotide-binding</keyword>
<keyword id="KW-1185">Reference proteome</keyword>
<keyword id="KW-0694">RNA-binding</keyword>
<keyword id="KW-0808">Transferase</keyword>
<keyword id="KW-0819">tRNA processing</keyword>
<keyword id="KW-0820">tRNA-binding</keyword>
<gene>
    <name evidence="1" type="primary">mnmA</name>
    <name type="ordered locus">Xaut_0404</name>
</gene>
<comment type="function">
    <text evidence="1">Catalyzes the 2-thiolation of uridine at the wobble position (U34) of tRNA, leading to the formation of s(2)U34.</text>
</comment>
<comment type="catalytic activity">
    <reaction evidence="1">
        <text>S-sulfanyl-L-cysteinyl-[protein] + uridine(34) in tRNA + AH2 + ATP = 2-thiouridine(34) in tRNA + L-cysteinyl-[protein] + A + AMP + diphosphate + H(+)</text>
        <dbReference type="Rhea" id="RHEA:47032"/>
        <dbReference type="Rhea" id="RHEA-COMP:10131"/>
        <dbReference type="Rhea" id="RHEA-COMP:11726"/>
        <dbReference type="Rhea" id="RHEA-COMP:11727"/>
        <dbReference type="Rhea" id="RHEA-COMP:11728"/>
        <dbReference type="ChEBI" id="CHEBI:13193"/>
        <dbReference type="ChEBI" id="CHEBI:15378"/>
        <dbReference type="ChEBI" id="CHEBI:17499"/>
        <dbReference type="ChEBI" id="CHEBI:29950"/>
        <dbReference type="ChEBI" id="CHEBI:30616"/>
        <dbReference type="ChEBI" id="CHEBI:33019"/>
        <dbReference type="ChEBI" id="CHEBI:61963"/>
        <dbReference type="ChEBI" id="CHEBI:65315"/>
        <dbReference type="ChEBI" id="CHEBI:87170"/>
        <dbReference type="ChEBI" id="CHEBI:456215"/>
        <dbReference type="EC" id="2.8.1.13"/>
    </reaction>
</comment>
<comment type="subcellular location">
    <subcellularLocation>
        <location evidence="1">Cytoplasm</location>
    </subcellularLocation>
</comment>
<comment type="similarity">
    <text evidence="1">Belongs to the MnmA/TRMU family.</text>
</comment>
<comment type="sequence caution" evidence="2">
    <conflict type="erroneous initiation">
        <sequence resource="EMBL-CDS" id="ABS65662"/>
    </conflict>
</comment>
<protein>
    <recommendedName>
        <fullName evidence="1">tRNA-specific 2-thiouridylase MnmA</fullName>
        <ecNumber evidence="1">2.8.1.13</ecNumber>
    </recommendedName>
</protein>
<organism>
    <name type="scientific">Xanthobacter autotrophicus (strain ATCC BAA-1158 / Py2)</name>
    <dbReference type="NCBI Taxonomy" id="78245"/>
    <lineage>
        <taxon>Bacteria</taxon>
        <taxon>Pseudomonadati</taxon>
        <taxon>Pseudomonadota</taxon>
        <taxon>Alphaproteobacteria</taxon>
        <taxon>Hyphomicrobiales</taxon>
        <taxon>Xanthobacteraceae</taxon>
        <taxon>Xanthobacter</taxon>
    </lineage>
</organism>
<sequence>MTDLPLLDTDGDPASTRVVVAMSGGVDSSVVAGLYARAGYDVVGVTLQLYDHGEAAHRRGACCAGQDIYDASEVARTLGIPHYVLDYESRFKEEVIDRFAASYASGVTPIPCVDCNRTVKFRDLLATAEELGARYLATGHYVASRALPDGRRGLYRAAEEARDQSYFLYATTAAQLERLRFPLGEMRKADVRALAAEFGLPVADKPDSQDICFVPGGDYAQVVQRLRPEAAEPGDIVHLDGRVLGRHRGVMHYTIGQRKGLGIATPEPLYVIAIDAARQQVRVGPRAALSVSAITIDDVNWLGDIPFTDALARQADVYVKVRSTRPPVPAHLARATDGTPAVHLAVGEEGVAPGQACVLYDDAGAAARLLGGGTIMRAERVAKSVAEVA</sequence>
<feature type="chain" id="PRO_0000349857" description="tRNA-specific 2-thiouridylase MnmA">
    <location>
        <begin position="1"/>
        <end position="389"/>
    </location>
</feature>
<feature type="region of interest" description="Interaction with tRNA" evidence="1">
    <location>
        <begin position="162"/>
        <end position="164"/>
    </location>
</feature>
<feature type="active site" description="Nucleophile" evidence="1">
    <location>
        <position position="115"/>
    </location>
</feature>
<feature type="active site" description="Cysteine persulfide intermediate" evidence="1">
    <location>
        <position position="212"/>
    </location>
</feature>
<feature type="binding site" evidence="1">
    <location>
        <begin position="21"/>
        <end position="28"/>
    </location>
    <ligand>
        <name>ATP</name>
        <dbReference type="ChEBI" id="CHEBI:30616"/>
    </ligand>
</feature>
<feature type="binding site" evidence="1">
    <location>
        <position position="47"/>
    </location>
    <ligand>
        <name>ATP</name>
        <dbReference type="ChEBI" id="CHEBI:30616"/>
    </ligand>
</feature>
<feature type="binding site" evidence="1">
    <location>
        <position position="139"/>
    </location>
    <ligand>
        <name>ATP</name>
        <dbReference type="ChEBI" id="CHEBI:30616"/>
    </ligand>
</feature>
<feature type="site" description="Interaction with tRNA" evidence="1">
    <location>
        <position position="140"/>
    </location>
</feature>
<feature type="site" description="Interaction with tRNA" evidence="1">
    <location>
        <position position="355"/>
    </location>
</feature>
<feature type="disulfide bond" description="Alternate" evidence="1">
    <location>
        <begin position="115"/>
        <end position="212"/>
    </location>
</feature>
<reference key="1">
    <citation type="submission" date="2007-07" db="EMBL/GenBank/DDBJ databases">
        <title>Complete sequence of chromosome of Xanthobacter autotrophicus Py2.</title>
        <authorList>
            <consortium name="US DOE Joint Genome Institute"/>
            <person name="Copeland A."/>
            <person name="Lucas S."/>
            <person name="Lapidus A."/>
            <person name="Barry K."/>
            <person name="Glavina del Rio T."/>
            <person name="Hammon N."/>
            <person name="Israni S."/>
            <person name="Dalin E."/>
            <person name="Tice H."/>
            <person name="Pitluck S."/>
            <person name="Sims D."/>
            <person name="Brettin T."/>
            <person name="Bruce D."/>
            <person name="Detter J.C."/>
            <person name="Han C."/>
            <person name="Tapia R."/>
            <person name="Brainard J."/>
            <person name="Schmutz J."/>
            <person name="Larimer F."/>
            <person name="Land M."/>
            <person name="Hauser L."/>
            <person name="Kyrpides N."/>
            <person name="Kim E."/>
            <person name="Ensigns S.A."/>
            <person name="Richardson P."/>
        </authorList>
    </citation>
    <scope>NUCLEOTIDE SEQUENCE [LARGE SCALE GENOMIC DNA]</scope>
    <source>
        <strain>ATCC BAA-1158 / Py2</strain>
    </source>
</reference>
<accession>A7ICB9</accession>